<dbReference type="EMBL" id="AF041819">
    <property type="protein sequence ID" value="AAB96961.1"/>
    <property type="molecule type" value="Genomic_DNA"/>
</dbReference>
<dbReference type="EMBL" id="LT708304">
    <property type="protein sequence ID" value="SIU00218.1"/>
    <property type="molecule type" value="Genomic_DNA"/>
</dbReference>
<dbReference type="RefSeq" id="NP_855267.1">
    <property type="nucleotide sequence ID" value="NC_002945.3"/>
</dbReference>
<dbReference type="KEGG" id="mbo:BQ2027_MB1614C"/>
<dbReference type="PATRIC" id="fig|233413.5.peg.1762"/>
<dbReference type="Proteomes" id="UP000001419">
    <property type="component" value="Chromosome"/>
</dbReference>
<dbReference type="InterPro" id="IPR003870">
    <property type="entry name" value="DUF222"/>
</dbReference>
<dbReference type="Pfam" id="PF02720">
    <property type="entry name" value="DUF222"/>
    <property type="match status" value="1"/>
</dbReference>
<protein>
    <recommendedName>
        <fullName>Uncharacterized protein Mb1614c</fullName>
    </recommendedName>
</protein>
<evidence type="ECO:0000256" key="1">
    <source>
        <dbReference type="SAM" id="MobiDB-lite"/>
    </source>
</evidence>
<evidence type="ECO:0000305" key="2"/>
<feature type="chain" id="PRO_0000103887" description="Uncharacterized protein Mb1614c">
    <location>
        <begin position="1"/>
        <end position="222"/>
    </location>
</feature>
<feature type="region of interest" description="Disordered" evidence="1">
    <location>
        <begin position="142"/>
        <end position="222"/>
    </location>
</feature>
<feature type="compositionally biased region" description="Low complexity" evidence="1">
    <location>
        <begin position="160"/>
        <end position="169"/>
    </location>
</feature>
<feature type="compositionally biased region" description="Basic residues" evidence="1">
    <location>
        <begin position="182"/>
        <end position="196"/>
    </location>
</feature>
<gene>
    <name type="ordered locus">BQ2027_MB1614C</name>
</gene>
<proteinExistence type="inferred from homology"/>
<name>Y1614_MYCBO</name>
<sequence length="222" mass="24591">MLANSREELVEVFDALDAELDRLDEVSFEVLTTPERLRSLERLECLVRRLPAVGHTLINQLDTQASEEELGGTLCCALANRLRITKPDAALRIADAADLGPRRALTGEPLAPQLTATATAQRQGLIGEAHIKVIRALFRPPARRGGCVHPPGRRSRPGRQSRSISSRRAGPLRPAGHGLATPRRRPHRHRTRPQTRHHPEQPAIRRHVTAKWLPDPPSAGHL</sequence>
<accession>P0A5F2</accession>
<accession>A0A1R3XYS8</accession>
<accession>O06602</accession>
<accession>O52589</accession>
<accession>X2BIL6</accession>
<reference key="1">
    <citation type="submission" date="1998-01" db="EMBL/GenBank/DDBJ databases">
        <title>Cloning, sequencing, and identification of Mycobacterium bovis BCG biotin biosynthetic genes by complementing two Mycobacterium smegmatis biotin mutants.</title>
        <authorList>
            <person name="Yu S."/>
            <person name="Jacobs W.R. Jr."/>
        </authorList>
    </citation>
    <scope>NUCLEOTIDE SEQUENCE [GENOMIC DNA]</scope>
    <source>
        <strain>BCG / Pasteur</strain>
    </source>
</reference>
<reference key="2">
    <citation type="journal article" date="2003" name="Proc. Natl. Acad. Sci. U.S.A.">
        <title>The complete genome sequence of Mycobacterium bovis.</title>
        <authorList>
            <person name="Garnier T."/>
            <person name="Eiglmeier K."/>
            <person name="Camus J.-C."/>
            <person name="Medina N."/>
            <person name="Mansoor H."/>
            <person name="Pryor M."/>
            <person name="Duthoy S."/>
            <person name="Grondin S."/>
            <person name="Lacroix C."/>
            <person name="Monsempe C."/>
            <person name="Simon S."/>
            <person name="Harris B."/>
            <person name="Atkin R."/>
            <person name="Doggett J."/>
            <person name="Mayes R."/>
            <person name="Keating L."/>
            <person name="Wheeler P.R."/>
            <person name="Parkhill J."/>
            <person name="Barrell B.G."/>
            <person name="Cole S.T."/>
            <person name="Gordon S.V."/>
            <person name="Hewinson R.G."/>
        </authorList>
    </citation>
    <scope>NUCLEOTIDE SEQUENCE [LARGE SCALE GENOMIC DNA]</scope>
    <source>
        <strain>ATCC BAA-935 / AF2122/97</strain>
    </source>
</reference>
<reference key="3">
    <citation type="journal article" date="2017" name="Genome Announc.">
        <title>Updated reference genome sequence and annotation of Mycobacterium bovis AF2122/97.</title>
        <authorList>
            <person name="Malone K.M."/>
            <person name="Farrell D."/>
            <person name="Stuber T.P."/>
            <person name="Schubert O.T."/>
            <person name="Aebersold R."/>
            <person name="Robbe-Austerman S."/>
            <person name="Gordon S.V."/>
        </authorList>
    </citation>
    <scope>NUCLEOTIDE SEQUENCE [LARGE SCALE GENOMIC DNA]</scope>
    <scope>GENOME REANNOTATION</scope>
    <source>
        <strain>ATCC BAA-935 / AF2122/97</strain>
    </source>
</reference>
<comment type="similarity">
    <text evidence="2">Belongs to the Rv1128c/1148c/1588c/1702c/1945/3466 family.</text>
</comment>
<organism>
    <name type="scientific">Mycobacterium bovis (strain ATCC BAA-935 / AF2122/97)</name>
    <dbReference type="NCBI Taxonomy" id="233413"/>
    <lineage>
        <taxon>Bacteria</taxon>
        <taxon>Bacillati</taxon>
        <taxon>Actinomycetota</taxon>
        <taxon>Actinomycetes</taxon>
        <taxon>Mycobacteriales</taxon>
        <taxon>Mycobacteriaceae</taxon>
        <taxon>Mycobacterium</taxon>
        <taxon>Mycobacterium tuberculosis complex</taxon>
    </lineage>
</organism>
<keyword id="KW-1185">Reference proteome</keyword>